<gene>
    <name evidence="13" type="primary">Khdrbs1</name>
    <name evidence="10" type="synonym">Sam68</name>
</gene>
<dbReference type="EMBL" id="AF305619">
    <property type="protein sequence ID" value="AAL09361.1"/>
    <property type="molecule type" value="mRNA"/>
</dbReference>
<dbReference type="EMBL" id="AF393783">
    <property type="protein sequence ID" value="AAK77001.1"/>
    <property type="molecule type" value="mRNA"/>
</dbReference>
<dbReference type="EMBL" id="BC061987">
    <property type="protein sequence ID" value="AAH61987.1"/>
    <property type="molecule type" value="mRNA"/>
</dbReference>
<dbReference type="RefSeq" id="NP_569089.1">
    <property type="nucleotide sequence ID" value="NM_130405.2"/>
</dbReference>
<dbReference type="SMR" id="Q91V33"/>
<dbReference type="BioGRID" id="250715">
    <property type="interactions" value="4"/>
</dbReference>
<dbReference type="CORUM" id="Q91V33"/>
<dbReference type="FunCoup" id="Q91V33">
    <property type="interactions" value="4715"/>
</dbReference>
<dbReference type="IntAct" id="Q91V33">
    <property type="interactions" value="2"/>
</dbReference>
<dbReference type="STRING" id="10116.ENSRNOP00000066894"/>
<dbReference type="GlyGen" id="Q91V33">
    <property type="glycosylation" value="1 site"/>
</dbReference>
<dbReference type="iPTMnet" id="Q91V33"/>
<dbReference type="PhosphoSitePlus" id="Q91V33"/>
<dbReference type="SwissPalm" id="Q91V33"/>
<dbReference type="jPOST" id="Q91V33"/>
<dbReference type="PaxDb" id="10116-ENSRNOP00000066894"/>
<dbReference type="Ensembl" id="ENSRNOT00000075270.2">
    <property type="protein sequence ID" value="ENSRNOP00000066894.1"/>
    <property type="gene ID" value="ENSRNOG00000046794.2"/>
</dbReference>
<dbReference type="GeneID" id="117268"/>
<dbReference type="KEGG" id="rno:117268"/>
<dbReference type="AGR" id="RGD:621459"/>
<dbReference type="CTD" id="10657"/>
<dbReference type="RGD" id="621459">
    <property type="gene designation" value="Khdrbs1"/>
</dbReference>
<dbReference type="eggNOG" id="KOG1588">
    <property type="taxonomic scope" value="Eukaryota"/>
</dbReference>
<dbReference type="GeneTree" id="ENSGT00940000155718"/>
<dbReference type="HOGENOM" id="CLU_034976_0_0_1"/>
<dbReference type="InParanoid" id="Q91V33"/>
<dbReference type="OMA" id="GYDENYT"/>
<dbReference type="OrthoDB" id="6777263at2759"/>
<dbReference type="PhylomeDB" id="Q91V33"/>
<dbReference type="Reactome" id="R-RNO-8849468">
    <property type="pathway name" value="PTK6 Regulates Proteins Involved in RNA Processing"/>
</dbReference>
<dbReference type="CD-CODE" id="1E07FF65">
    <property type="entry name" value="Neuronal RNP granule"/>
</dbReference>
<dbReference type="PRO" id="PR:Q91V33"/>
<dbReference type="Proteomes" id="UP000002494">
    <property type="component" value="Chromosome 5"/>
</dbReference>
<dbReference type="Bgee" id="ENSRNOG00000046794">
    <property type="expression patterns" value="Expressed in thymus and 19 other cell types or tissues"/>
</dbReference>
<dbReference type="GO" id="GO:0005737">
    <property type="term" value="C:cytoplasm"/>
    <property type="evidence" value="ECO:0000266"/>
    <property type="project" value="RGD"/>
</dbReference>
<dbReference type="GO" id="GO:0070618">
    <property type="term" value="C:Grb2-Sos complex"/>
    <property type="evidence" value="ECO:0000314"/>
    <property type="project" value="RGD"/>
</dbReference>
<dbReference type="GO" id="GO:0016020">
    <property type="term" value="C:membrane"/>
    <property type="evidence" value="ECO:0000250"/>
    <property type="project" value="UniProtKB"/>
</dbReference>
<dbReference type="GO" id="GO:0005654">
    <property type="term" value="C:nucleoplasm"/>
    <property type="evidence" value="ECO:0007669"/>
    <property type="project" value="Ensembl"/>
</dbReference>
<dbReference type="GO" id="GO:0005634">
    <property type="term" value="C:nucleus"/>
    <property type="evidence" value="ECO:0000314"/>
    <property type="project" value="UniProtKB"/>
</dbReference>
<dbReference type="GO" id="GO:0032991">
    <property type="term" value="C:protein-containing complex"/>
    <property type="evidence" value="ECO:0000266"/>
    <property type="project" value="RGD"/>
</dbReference>
<dbReference type="GO" id="GO:0042802">
    <property type="term" value="F:identical protein binding"/>
    <property type="evidence" value="ECO:0000353"/>
    <property type="project" value="UniProtKB"/>
</dbReference>
<dbReference type="GO" id="GO:0140678">
    <property type="term" value="F:molecular function inhibitor activity"/>
    <property type="evidence" value="ECO:0000266"/>
    <property type="project" value="RGD"/>
</dbReference>
<dbReference type="GO" id="GO:0003729">
    <property type="term" value="F:mRNA binding"/>
    <property type="evidence" value="ECO:0000318"/>
    <property type="project" value="GO_Central"/>
</dbReference>
<dbReference type="GO" id="GO:0008143">
    <property type="term" value="F:poly(A) binding"/>
    <property type="evidence" value="ECO:0000266"/>
    <property type="project" value="RGD"/>
</dbReference>
<dbReference type="GO" id="GO:0008266">
    <property type="term" value="F:poly(U) RNA binding"/>
    <property type="evidence" value="ECO:0000266"/>
    <property type="project" value="RGD"/>
</dbReference>
<dbReference type="GO" id="GO:0019904">
    <property type="term" value="F:protein domain specific binding"/>
    <property type="evidence" value="ECO:0000266"/>
    <property type="project" value="RGD"/>
</dbReference>
<dbReference type="GO" id="GO:1990782">
    <property type="term" value="F:protein tyrosine kinase binding"/>
    <property type="evidence" value="ECO:0000266"/>
    <property type="project" value="RGD"/>
</dbReference>
<dbReference type="GO" id="GO:0044877">
    <property type="term" value="F:protein-containing complex binding"/>
    <property type="evidence" value="ECO:0000314"/>
    <property type="project" value="RGD"/>
</dbReference>
<dbReference type="GO" id="GO:0003723">
    <property type="term" value="F:RNA binding"/>
    <property type="evidence" value="ECO:0000250"/>
    <property type="project" value="UniProtKB"/>
</dbReference>
<dbReference type="GO" id="GO:0042169">
    <property type="term" value="F:SH2 domain binding"/>
    <property type="evidence" value="ECO:0000266"/>
    <property type="project" value="RGD"/>
</dbReference>
<dbReference type="GO" id="GO:0017124">
    <property type="term" value="F:SH3 domain binding"/>
    <property type="evidence" value="ECO:0000314"/>
    <property type="project" value="RGD"/>
</dbReference>
<dbReference type="GO" id="GO:0035591">
    <property type="term" value="F:signaling adaptor activity"/>
    <property type="evidence" value="ECO:0000266"/>
    <property type="project" value="RGD"/>
</dbReference>
<dbReference type="GO" id="GO:0007166">
    <property type="term" value="P:cell surface receptor signaling pathway"/>
    <property type="evidence" value="ECO:0000314"/>
    <property type="project" value="UniProtKB"/>
</dbReference>
<dbReference type="GO" id="GO:0000086">
    <property type="term" value="P:G2/M transition of mitotic cell cycle"/>
    <property type="evidence" value="ECO:0000250"/>
    <property type="project" value="UniProtKB"/>
</dbReference>
<dbReference type="GO" id="GO:0006397">
    <property type="term" value="P:mRNA processing"/>
    <property type="evidence" value="ECO:0007669"/>
    <property type="project" value="UniProtKB-KW"/>
</dbReference>
<dbReference type="GO" id="GO:0045892">
    <property type="term" value="P:negative regulation of DNA-templated transcription"/>
    <property type="evidence" value="ECO:0000250"/>
    <property type="project" value="UniProtKB"/>
</dbReference>
<dbReference type="GO" id="GO:0000122">
    <property type="term" value="P:negative regulation of transcription by RNA polymerase II"/>
    <property type="evidence" value="ECO:0000266"/>
    <property type="project" value="RGD"/>
</dbReference>
<dbReference type="GO" id="GO:0046833">
    <property type="term" value="P:positive regulation of RNA export from nucleus"/>
    <property type="evidence" value="ECO:0000250"/>
    <property type="project" value="UniProtKB"/>
</dbReference>
<dbReference type="GO" id="GO:0045948">
    <property type="term" value="P:positive regulation of translational initiation"/>
    <property type="evidence" value="ECO:0000250"/>
    <property type="project" value="UniProtKB"/>
</dbReference>
<dbReference type="GO" id="GO:0000381">
    <property type="term" value="P:regulation of alternative mRNA splicing, via spliceosome"/>
    <property type="evidence" value="ECO:0000314"/>
    <property type="project" value="UniProtKB"/>
</dbReference>
<dbReference type="GO" id="GO:0042981">
    <property type="term" value="P:regulation of apoptotic process"/>
    <property type="evidence" value="ECO:0000266"/>
    <property type="project" value="RGD"/>
</dbReference>
<dbReference type="GO" id="GO:0051726">
    <property type="term" value="P:regulation of cell cycle"/>
    <property type="evidence" value="ECO:0000266"/>
    <property type="project" value="RGD"/>
</dbReference>
<dbReference type="GO" id="GO:0048024">
    <property type="term" value="P:regulation of mRNA splicing, via spliceosome"/>
    <property type="evidence" value="ECO:0000266"/>
    <property type="project" value="RGD"/>
</dbReference>
<dbReference type="GO" id="GO:0046831">
    <property type="term" value="P:regulation of RNA export from nucleus"/>
    <property type="evidence" value="ECO:0000250"/>
    <property type="project" value="UniProtKB"/>
</dbReference>
<dbReference type="GO" id="GO:0043484">
    <property type="term" value="P:regulation of RNA splicing"/>
    <property type="evidence" value="ECO:0000266"/>
    <property type="project" value="RGD"/>
</dbReference>
<dbReference type="GO" id="GO:0009966">
    <property type="term" value="P:regulation of signal transduction"/>
    <property type="evidence" value="ECO:0000303"/>
    <property type="project" value="RGD"/>
</dbReference>
<dbReference type="GO" id="GO:0007283">
    <property type="term" value="P:spermatogenesis"/>
    <property type="evidence" value="ECO:0000270"/>
    <property type="project" value="UniProtKB"/>
</dbReference>
<dbReference type="GO" id="GO:0050852">
    <property type="term" value="P:T cell receptor signaling pathway"/>
    <property type="evidence" value="ECO:0000266"/>
    <property type="project" value="RGD"/>
</dbReference>
<dbReference type="CDD" id="cd22468">
    <property type="entry name" value="KH-I_KHDRBS1"/>
    <property type="match status" value="1"/>
</dbReference>
<dbReference type="FunFam" id="3.30.1370.10:FF:000036">
    <property type="entry name" value="KH RNA binding domain containing, signal transduction associated 1"/>
    <property type="match status" value="1"/>
</dbReference>
<dbReference type="Gene3D" id="3.30.1370.10">
    <property type="entry name" value="K Homology domain, type 1"/>
    <property type="match status" value="1"/>
</dbReference>
<dbReference type="InterPro" id="IPR045071">
    <property type="entry name" value="BBP-like"/>
</dbReference>
<dbReference type="InterPro" id="IPR055256">
    <property type="entry name" value="KH_1_KHDC4/BBP-like"/>
</dbReference>
<dbReference type="InterPro" id="IPR004087">
    <property type="entry name" value="KH_dom"/>
</dbReference>
<dbReference type="InterPro" id="IPR036612">
    <property type="entry name" value="KH_dom_type_1_sf"/>
</dbReference>
<dbReference type="InterPro" id="IPR032571">
    <property type="entry name" value="Qua1_dom"/>
</dbReference>
<dbReference type="InterPro" id="IPR032335">
    <property type="entry name" value="Sam68-YY"/>
</dbReference>
<dbReference type="PANTHER" id="PTHR11208:SF30">
    <property type="entry name" value="KH DOMAIN-CONTAINING, RNA-BINDING, SIGNAL TRANSDUCTION-ASSOCIATED PROTEIN 1"/>
    <property type="match status" value="1"/>
</dbReference>
<dbReference type="PANTHER" id="PTHR11208">
    <property type="entry name" value="RNA-BINDING PROTEIN RELATED"/>
    <property type="match status" value="1"/>
</dbReference>
<dbReference type="Pfam" id="PF22675">
    <property type="entry name" value="KH-I_KHDC4-BBP"/>
    <property type="match status" value="1"/>
</dbReference>
<dbReference type="Pfam" id="PF16274">
    <property type="entry name" value="Qua1"/>
    <property type="match status" value="1"/>
</dbReference>
<dbReference type="Pfam" id="PF16568">
    <property type="entry name" value="Sam68-YY"/>
    <property type="match status" value="1"/>
</dbReference>
<dbReference type="SMART" id="SM00322">
    <property type="entry name" value="KH"/>
    <property type="match status" value="1"/>
</dbReference>
<dbReference type="SUPFAM" id="SSF54791">
    <property type="entry name" value="Eukaryotic type KH-domain (KH-domain type I)"/>
    <property type="match status" value="1"/>
</dbReference>
<dbReference type="PROSITE" id="PS50084">
    <property type="entry name" value="KH_TYPE_1"/>
    <property type="match status" value="1"/>
</dbReference>
<sequence length="443" mass="48315">MQRRDDPAARLTRSSGRSCSKDPSGAHPSVRLTPSRPSPLPHRSRGGGGGPRGGARASPATQPPPLLPPSNPGPDATVVGSAPTPLLPPSATAAAKMEPENKYLPELMAEKDSLDPSFTHAMQLLSVEIEKIQKGESKKDDEENYLDLFSHKNMKLKERVLIPVKQYPKFNFVGKILGPQGNTIKRLQEETGAKISVLGKGSMRDKAKEEELRKGGDPKYAHLNMDLHVFIEVFGPPCEAYALMAHAMEEVKKFLVPDMMDDICQEQFLELSYLNGVPEPSRGRGVSVRGRGAAPPPPPVPRGRGVGPPRGALVRGTPVRGSITRGATVTRGVPPPPTVRGAPTPRARTAGIQRIPLPPTPAPETYEDYGYDDSYAEQSYEGYEGYYSQSQGESEYYDYGHGELQDSYEAYGQDDWNGTRPSLKAPPARPVKGAYREHPYGRY</sequence>
<feature type="chain" id="PRO_0000050126" description="KH domain-containing, RNA-binding, signal transduction-associated protein 1">
    <location>
        <begin position="1"/>
        <end position="443"/>
    </location>
</feature>
<feature type="domain" description="KH" evidence="4">
    <location>
        <begin position="171"/>
        <end position="197"/>
    </location>
</feature>
<feature type="region of interest" description="Disordered" evidence="5">
    <location>
        <begin position="1"/>
        <end position="95"/>
    </location>
</feature>
<feature type="region of interest" description="Involved in homodimerization" evidence="1">
    <location>
        <begin position="100"/>
        <end position="260"/>
    </location>
</feature>
<feature type="region of interest" description="Disordered" evidence="5">
    <location>
        <begin position="280"/>
        <end position="317"/>
    </location>
</feature>
<feature type="region of interest" description="Disordered" evidence="5">
    <location>
        <begin position="326"/>
        <end position="345"/>
    </location>
</feature>
<feature type="region of interest" description="Interaction with HNRNPA1" evidence="1">
    <location>
        <begin position="351"/>
        <end position="443"/>
    </location>
</feature>
<feature type="region of interest" description="Interaction with ZBTB7A" evidence="1">
    <location>
        <begin position="400"/>
        <end position="420"/>
    </location>
</feature>
<feature type="region of interest" description="Disordered" evidence="5">
    <location>
        <begin position="411"/>
        <end position="443"/>
    </location>
</feature>
<feature type="compositionally biased region" description="Pro residues" evidence="5">
    <location>
        <begin position="61"/>
        <end position="72"/>
    </location>
</feature>
<feature type="compositionally biased region" description="Low complexity" evidence="5">
    <location>
        <begin position="81"/>
        <end position="95"/>
    </location>
</feature>
<feature type="compositionally biased region" description="Low complexity" evidence="5">
    <location>
        <begin position="283"/>
        <end position="293"/>
    </location>
</feature>
<feature type="compositionally biased region" description="Low complexity" evidence="5">
    <location>
        <begin position="307"/>
        <end position="316"/>
    </location>
</feature>
<feature type="compositionally biased region" description="Basic and acidic residues" evidence="5">
    <location>
        <begin position="434"/>
        <end position="443"/>
    </location>
</feature>
<feature type="modified residue" description="Phosphoserine" evidence="1">
    <location>
        <position position="18"/>
    </location>
</feature>
<feature type="modified residue" description="Phosphoserine" evidence="1">
    <location>
        <position position="20"/>
    </location>
</feature>
<feature type="modified residue" description="N6-acetyllysine" evidence="2">
    <location>
        <position position="21"/>
    </location>
</feature>
<feature type="modified residue" description="Phosphoserine" evidence="1">
    <location>
        <position position="29"/>
    </location>
</feature>
<feature type="modified residue" description="Phosphothreonine" evidence="1">
    <location>
        <position position="33"/>
    </location>
</feature>
<feature type="modified residue" description="Asymmetric dimethylarginine; by PRMT1" evidence="1">
    <location>
        <position position="45"/>
    </location>
</feature>
<feature type="modified residue" description="Asymmetric dimethylarginine; by PRMT1" evidence="1">
    <location>
        <position position="52"/>
    </location>
</feature>
<feature type="modified residue" description="Phosphoserine" evidence="2">
    <location>
        <position position="58"/>
    </location>
</feature>
<feature type="modified residue" description="Phosphothreonine; by MAPK1" evidence="2">
    <location>
        <position position="84"/>
    </location>
</feature>
<feature type="modified residue" description="Phosphoserine" evidence="2">
    <location>
        <position position="113"/>
    </location>
</feature>
<feature type="modified residue" description="Phosphoserine" evidence="1">
    <location>
        <position position="150"/>
    </location>
</feature>
<feature type="modified residue" description="N6-acetyllysine; alternate" evidence="1">
    <location>
        <position position="175"/>
    </location>
</feature>
<feature type="modified residue" description="Phosphothreonine" evidence="1">
    <location>
        <position position="183"/>
    </location>
</feature>
<feature type="modified residue" description="Omega-N-methylarginine" evidence="1">
    <location>
        <position position="282"/>
    </location>
</feature>
<feature type="modified residue" description="Omega-N-methylarginine" evidence="1">
    <location>
        <position position="284"/>
    </location>
</feature>
<feature type="modified residue" description="Omega-N-methylarginine" evidence="2">
    <location>
        <position position="291"/>
    </location>
</feature>
<feature type="modified residue" description="Asymmetric dimethylarginine; by PRMT1" evidence="1">
    <location>
        <position position="304"/>
    </location>
</feature>
<feature type="modified residue" description="Omega-N-methylarginine; by PRMT1" evidence="1">
    <location>
        <position position="310"/>
    </location>
</feature>
<feature type="modified residue" description="Omega-N-methylarginine; by PRMT1" evidence="1">
    <location>
        <position position="315"/>
    </location>
</feature>
<feature type="modified residue" description="Dimethylated arginine; alternate" evidence="1">
    <location>
        <position position="320"/>
    </location>
</feature>
<feature type="modified residue" description="Omega-N-methylarginine; by PRMT1; alternate" evidence="1">
    <location>
        <position position="320"/>
    </location>
</feature>
<feature type="modified residue" description="Omega-N-methylarginine; by PRMT1" evidence="1">
    <location>
        <position position="325"/>
    </location>
</feature>
<feature type="modified residue" description="Asymmetric dimethylarginine; alternate" evidence="2">
    <location>
        <position position="331"/>
    </location>
</feature>
<feature type="modified residue" description="Dimethylated arginine; alternate" evidence="1">
    <location>
        <position position="331"/>
    </location>
</feature>
<feature type="modified residue" description="Omega-N-methylarginine; by PRMT1; alternate" evidence="1">
    <location>
        <position position="331"/>
    </location>
</feature>
<feature type="modified residue" description="Dimethylated arginine; alternate" evidence="1">
    <location>
        <position position="340"/>
    </location>
</feature>
<feature type="modified residue" description="Omega-N-methylarginine; by PRMT1; alternate" evidence="1">
    <location>
        <position position="340"/>
    </location>
</feature>
<feature type="modified residue" description="Phosphotyrosine" evidence="1">
    <location>
        <position position="387"/>
    </location>
</feature>
<feature type="modified residue" description="Phosphoserine" evidence="1">
    <location>
        <position position="390"/>
    </location>
</feature>
<feature type="modified residue" description="Phosphotyrosine; by PTK6" evidence="1">
    <location>
        <position position="435"/>
    </location>
</feature>
<feature type="modified residue" description="Phosphotyrosine; by PTK6" evidence="1">
    <location>
        <position position="440"/>
    </location>
</feature>
<feature type="modified residue" description="Phosphotyrosine; by PTK6" evidence="1">
    <location>
        <position position="443"/>
    </location>
</feature>
<feature type="cross-link" description="Glycyl lysine isopeptide (Lys-Gly) (interchain with G-Cter in SUMO2)" evidence="1">
    <location>
        <position position="96"/>
    </location>
</feature>
<feature type="cross-link" description="Glycyl lysine isopeptide (Lys-Gly) (interchain with G-Cter in SUMO2)" evidence="1">
    <location>
        <position position="102"/>
    </location>
</feature>
<feature type="cross-link" description="Glycyl lysine isopeptide (Lys-Gly) (interchain with G-Cter in SUMO2)" evidence="1">
    <location>
        <position position="139"/>
    </location>
</feature>
<feature type="cross-link" description="Glycyl lysine isopeptide (Lys-Gly) (interchain with G-Cter in SUMO2); alternate" evidence="1">
    <location>
        <position position="175"/>
    </location>
</feature>
<feature type="cross-link" description="Glycyl lysine isopeptide (Lys-Gly) (interchain with G-Cter in SUMO2)" evidence="1">
    <location>
        <position position="432"/>
    </location>
</feature>
<name>KHDR1_RAT</name>
<accession>Q91V33</accession>
<organism>
    <name type="scientific">Rattus norvegicus</name>
    <name type="common">Rat</name>
    <dbReference type="NCBI Taxonomy" id="10116"/>
    <lineage>
        <taxon>Eukaryota</taxon>
        <taxon>Metazoa</taxon>
        <taxon>Chordata</taxon>
        <taxon>Craniata</taxon>
        <taxon>Vertebrata</taxon>
        <taxon>Euteleostomi</taxon>
        <taxon>Mammalia</taxon>
        <taxon>Eutheria</taxon>
        <taxon>Euarchontoglires</taxon>
        <taxon>Glires</taxon>
        <taxon>Rodentia</taxon>
        <taxon>Myomorpha</taxon>
        <taxon>Muroidea</taxon>
        <taxon>Muridae</taxon>
        <taxon>Murinae</taxon>
        <taxon>Rattus</taxon>
    </lineage>
</organism>
<comment type="function">
    <text evidence="1 2 6">Recruited and tyrosine phosphorylated by several receptor systems, for example the T-cell, leptin and insulin receptors. Once phosphorylated, functions as an adapter protein in signal transduction cascades by binding to SH2 and SH3 domain-containing proteins. Role in G2-M progression in the cell cycle. Represses CBP-dependent transcriptional activation apparently by competing with other nuclear factors for binding to CBP. Also acts as a putative regulator of mRNA stability and/or translation rates and mediates mRNA nuclear export. Positively regulates the association of constitutive transport element (CTE)-containing mRNA with large polyribosomes and translation initiation. May not be involved in the nucleocytoplasmic export of unspliced (CTE)-containing RNA species. RNA-binding protein that plays a role in the regulation of alternative splicing and influences mRNA splice site selection and exon inclusion. Binds to RNA containing 5'-[AU]UAA-3' as a bipartite motif spaced by more than 15 nucleotides. Binds poly(A). Can regulate CD44 alternative splicing in a Ras pathway-dependent manner. In cooperation with HNRNPA1 modulates alternative splicing of BCL2L1 by promoting splicing toward isoform Bcl-X(S), and of SMN1. Can regulate alternative splicing of NRXN1 and NRXN3 in the laminin G-like domain 6 containing the evolutionary conserved neurexin alternative spliced segment 4 (AS4) involved in neurexin selective targeting to postsynaptic partners. In a neuronal activity-dependent manner cooperates synergistically with KHDRBS2/SLIM-1 in regulation of NRXN1 exon skipping at AS4. The cooperation with KHDRBS2/SLIM-1 is antagonistic for regulation of NXRN3 alternative splicing at AS4 (By similarity).</text>
</comment>
<comment type="subunit">
    <text evidence="1 2 6 7 8">Self-associates to form homooligomers when bound to RNA, oligomerization appears to be limited when binding to proteins. Interacts with KHDRBS3/SLIM-2 (By similarity). Forms a trimeric complex in the nucleus consisting of BANP, HDAC6 and KHDRBS1/SAM68; HDAC6 keeps KHDRBS1 in a deacetylated state which inhibits the inclusion of CD44 alternate exons (By similarity). The complex is disrupted by MAPK1/MAPK3-mediated phosphorylation of BANP which results in BANP export to the cytoplasm (By similarity). This facilitates acetylation of KHDRBS1 and CD44 variant exon inclusion (By similarity). Interacts with KHDRBS2/SLIM-1; heterooligomer formation of KHDRBS family proteins may modulate RNA substrate specificity (PubMed:15345239). Interacts with PIK3R1, PLCG1 (PubMed:10437794, PubMed:10748127). Interacts with RASA1, GRB2, SRC, CBP, PRMT1, APC, HNRNPA1. Interacts with PTK6 (via SH3 and SH2 domains). Forms a complex with ILF2, ILF3, YLPM1, RBMX, NCOA5 and PPP1CA (By similarity). Binds WBP4/FBP21 (via WW domains), FNBP4/FBP30 (via WW domains). Interacts (via Arg/Gly-rich-flanked Pro-rich regions) with FYN (via the SH3 domain) (PubMed:10748127). Interacts with the non-receptor tyrosine kinase SRMS; the interaction leads to phosphorylation of KHDRBS1 (By similarity). Interacts with ZBTB7A; negatively regulates KHDRBS1 splicing activity toward BCL2L1 (By similarity).</text>
</comment>
<comment type="interaction">
    <interactant intactId="EBI-518436">
        <id>Q91V33</id>
    </interactant>
    <interactant intactId="EBI-518443">
        <id>Q63787</id>
        <label>Pik3r1</label>
    </interactant>
    <organismsDiffer>false</organismsDiffer>
    <experiments>2</experiments>
</comment>
<comment type="subcellular location">
    <subcellularLocation>
        <location evidence="1">Nucleus</location>
    </subcellularLocation>
    <subcellularLocation>
        <location evidence="1">Cytoplasm</location>
    </subcellularLocation>
    <subcellularLocation>
        <location evidence="1">Membrane</location>
    </subcellularLocation>
    <text evidence="1">Predominantly located in the nucleus but also located partially in the cytoplasm.</text>
</comment>
<comment type="domain">
    <text evidence="8">The KH domain is required for binding to RNA.</text>
</comment>
<comment type="domain">
    <text>The Pro-rich domains are flanked by Arg/Gly-rich motifs which can be asymmetric dimethylated on arginine residues to give the DMA/Gly-rich regions. Selective methylation on these motifs can modulate protein-protein interactions.</text>
</comment>
<comment type="PTM">
    <text evidence="1">Tyrosine phosphorylated by several non-receptor tyrosine kinases including LCK, FYN and JAK3. Also tyrosine phosphorylated by the non-receptor tyrosine kinase SRMS in an EGF-dependent manner. Phosphorylation by PTK6 negatively regulates its RNA binding ability. Phosphorylation by PTK6 at Tyr-440 dictates the nuclear localization of KHDRBS1.</text>
</comment>
<comment type="PTM">
    <text evidence="1">Acetylated. Positively correlates with ability to bind RNA. Deacetylated by HDAC6; this regulates alternative splicing by inhibiting the inclusion of CD44 alternate exons.</text>
</comment>
<comment type="PTM">
    <text evidence="1">Arginine methylation is required for nuclear localization, Inhibits interaction with Src-like SH3 domains, but not interaction with WW domains of WBP4/FBP21 and FNBP4/FBP30.</text>
</comment>
<comment type="similarity">
    <text evidence="3">Belongs to the KHDRBS family.</text>
</comment>
<protein>
    <recommendedName>
        <fullName>KH domain-containing, RNA-binding, signal transduction-associated protein 1</fullName>
    </recommendedName>
    <alternativeName>
        <fullName>GAP-associated tyrosine phosphoprotein p62</fullName>
    </alternativeName>
    <alternativeName>
        <fullName>Src-associated in mitosis 68 kDa protein</fullName>
        <shortName>Sam68</shortName>
    </alternativeName>
    <alternativeName>
        <fullName>p21 Ras GTPase-activating protein-associated p62</fullName>
    </alternativeName>
    <alternativeName>
        <fullName>p68</fullName>
    </alternativeName>
</protein>
<keyword id="KW-0007">Acetylation</keyword>
<keyword id="KW-0131">Cell cycle</keyword>
<keyword id="KW-0963">Cytoplasm</keyword>
<keyword id="KW-1017">Isopeptide bond</keyword>
<keyword id="KW-0472">Membrane</keyword>
<keyword id="KW-0488">Methylation</keyword>
<keyword id="KW-0507">mRNA processing</keyword>
<keyword id="KW-0539">Nucleus</keyword>
<keyword id="KW-0597">Phosphoprotein</keyword>
<keyword id="KW-1185">Reference proteome</keyword>
<keyword id="KW-0694">RNA-binding</keyword>
<keyword id="KW-0729">SH3-binding</keyword>
<keyword id="KW-0804">Transcription</keyword>
<keyword id="KW-0805">Transcription regulation</keyword>
<keyword id="KW-0832">Ubl conjugation</keyword>
<reference evidence="9 12" key="1">
    <citation type="journal article" date="2004" name="Mol. Cell. Neurosci.">
        <title>p59(fyn)-mediated phosphorylation regulates the activity of the tissue-specific splicing factor rSLM-1.</title>
        <authorList>
            <person name="Stoss O."/>
            <person name="Novoyatleva T."/>
            <person name="Gencheva M."/>
            <person name="Olbrich M."/>
            <person name="Benderska N."/>
            <person name="Stamm S."/>
        </authorList>
    </citation>
    <scope>NUCLEOTIDE SEQUENCE [MRNA]</scope>
    <scope>HOMOOLIGOMERIZATION</scope>
    <scope>INTERACTION WITH KHDRB2</scope>
</reference>
<reference evidence="9 11" key="2">
    <citation type="submission" date="2001-06" db="EMBL/GenBank/DDBJ databases">
        <title>Characterization of Sam68 in skeletal muscle and brain of rat.</title>
        <authorList>
            <person name="Wang J.-M."/>
            <person name="Tseng C.-N."/>
            <person name="Yao Y."/>
            <person name="Wang Z.-Z."/>
        </authorList>
    </citation>
    <scope>NUCLEOTIDE SEQUENCE [MRNA]</scope>
    <source>
        <strain evidence="11">Sprague-Dawley</strain>
    </source>
</reference>
<reference evidence="10" key="3">
    <citation type="journal article" date="2004" name="Genome Res.">
        <title>The status, quality, and expansion of the NIH full-length cDNA project: the Mammalian Gene Collection (MGC).</title>
        <authorList>
            <consortium name="The MGC Project Team"/>
        </authorList>
    </citation>
    <scope>NUCLEOTIDE SEQUENCE [LARGE SCALE MRNA]</scope>
    <source>
        <tissue evidence="10">Prostate</tissue>
    </source>
</reference>
<reference evidence="9" key="4">
    <citation type="journal article" date="1999" name="FEBS Lett.">
        <title>p68 Sam is a substrate of the insulin receptor and associates with the SH2 domains of p85 PI3K.</title>
        <authorList>
            <person name="Sanchez-Margalet V."/>
            <person name="Najib S."/>
        </authorList>
    </citation>
    <scope>FUNCTION</scope>
    <scope>PHOSPHORYLATION</scope>
    <scope>INTERACTION WITH PIK3R1</scope>
</reference>
<reference evidence="9" key="5">
    <citation type="journal article" date="2000" name="J. Biol. Chem.">
        <title>Arginine methylation inhibits the binding of proline-rich ligands to Src homology 3, but not WW, domains.</title>
        <authorList>
            <person name="Bedford M.T."/>
            <person name="Frankel A."/>
            <person name="Yaffe M.B."/>
            <person name="Clarke S."/>
            <person name="Leder P."/>
            <person name="Richard S."/>
        </authorList>
    </citation>
    <scope>INTERACTION WITH FNBP4; WBP4; FYN AND PLCG1</scope>
    <scope>METHYLATION</scope>
</reference>
<evidence type="ECO:0000250" key="1">
    <source>
        <dbReference type="UniProtKB" id="Q07666"/>
    </source>
</evidence>
<evidence type="ECO:0000250" key="2">
    <source>
        <dbReference type="UniProtKB" id="Q60749"/>
    </source>
</evidence>
<evidence type="ECO:0000255" key="3"/>
<evidence type="ECO:0000255" key="4">
    <source>
        <dbReference type="PROSITE-ProRule" id="PRU00117"/>
    </source>
</evidence>
<evidence type="ECO:0000256" key="5">
    <source>
        <dbReference type="SAM" id="MobiDB-lite"/>
    </source>
</evidence>
<evidence type="ECO:0000269" key="6">
    <source>
    </source>
</evidence>
<evidence type="ECO:0000269" key="7">
    <source>
    </source>
</evidence>
<evidence type="ECO:0000269" key="8">
    <source>
    </source>
</evidence>
<evidence type="ECO:0000305" key="9"/>
<evidence type="ECO:0000312" key="10">
    <source>
        <dbReference type="EMBL" id="AAH61987.1"/>
    </source>
</evidence>
<evidence type="ECO:0000312" key="11">
    <source>
        <dbReference type="EMBL" id="AAK77001.1"/>
    </source>
</evidence>
<evidence type="ECO:0000312" key="12">
    <source>
        <dbReference type="EMBL" id="AAL09361.1"/>
    </source>
</evidence>
<evidence type="ECO:0000312" key="13">
    <source>
        <dbReference type="RGD" id="621459"/>
    </source>
</evidence>
<proteinExistence type="evidence at protein level"/>